<dbReference type="EC" id="2.7.11.1"/>
<dbReference type="EMBL" id="U31834">
    <property type="protein sequence ID" value="AAB03245.1"/>
    <property type="molecule type" value="mRNA"/>
</dbReference>
<dbReference type="EMBL" id="AL022604">
    <property type="protein sequence ID" value="CAA18738.1"/>
    <property type="molecule type" value="Genomic_DNA"/>
</dbReference>
<dbReference type="EMBL" id="AL161587">
    <property type="protein sequence ID" value="CAB80248.1"/>
    <property type="molecule type" value="Genomic_DNA"/>
</dbReference>
<dbReference type="EMBL" id="CP002687">
    <property type="protein sequence ID" value="AEE86498.1"/>
    <property type="molecule type" value="Genomic_DNA"/>
</dbReference>
<dbReference type="EMBL" id="CP002687">
    <property type="protein sequence ID" value="ANM67239.1"/>
    <property type="molecule type" value="Genomic_DNA"/>
</dbReference>
<dbReference type="EMBL" id="AK227104">
    <property type="protein sequence ID" value="BAE99156.1"/>
    <property type="molecule type" value="mRNA"/>
</dbReference>
<dbReference type="PIR" id="T06126">
    <property type="entry name" value="T06126"/>
</dbReference>
<dbReference type="RefSeq" id="NP_001329080.1">
    <property type="nucleotide sequence ID" value="NM_001342345.1"/>
</dbReference>
<dbReference type="RefSeq" id="NP_195257.1">
    <property type="nucleotide sequence ID" value="NM_119697.4"/>
</dbReference>
<dbReference type="SMR" id="Q38871"/>
<dbReference type="BioGRID" id="14967">
    <property type="interactions" value="4"/>
</dbReference>
<dbReference type="FunCoup" id="Q38871">
    <property type="interactions" value="2246"/>
</dbReference>
<dbReference type="STRING" id="3702.Q38871"/>
<dbReference type="iPTMnet" id="Q38871"/>
<dbReference type="PaxDb" id="3702-AT4G35310.1"/>
<dbReference type="ProteomicsDB" id="222809"/>
<dbReference type="EnsemblPlants" id="AT4G35310.1">
    <property type="protein sequence ID" value="AT4G35310.1"/>
    <property type="gene ID" value="AT4G35310"/>
</dbReference>
<dbReference type="EnsemblPlants" id="AT4G35310.2">
    <property type="protein sequence ID" value="AT4G35310.2"/>
    <property type="gene ID" value="AT4G35310"/>
</dbReference>
<dbReference type="GeneID" id="829685"/>
<dbReference type="Gramene" id="AT4G35310.1">
    <property type="protein sequence ID" value="AT4G35310.1"/>
    <property type="gene ID" value="AT4G35310"/>
</dbReference>
<dbReference type="Gramene" id="AT4G35310.2">
    <property type="protein sequence ID" value="AT4G35310.2"/>
    <property type="gene ID" value="AT4G35310"/>
</dbReference>
<dbReference type="KEGG" id="ath:AT4G35310"/>
<dbReference type="Araport" id="AT4G35310"/>
<dbReference type="TAIR" id="AT4G35310">
    <property type="gene designation" value="CPK5"/>
</dbReference>
<dbReference type="eggNOG" id="KOG0032">
    <property type="taxonomic scope" value="Eukaryota"/>
</dbReference>
<dbReference type="HOGENOM" id="CLU_000288_37_1_1"/>
<dbReference type="InParanoid" id="Q38871"/>
<dbReference type="OMA" id="MRHPWIC"/>
<dbReference type="PhylomeDB" id="Q38871"/>
<dbReference type="PRO" id="PR:Q38871"/>
<dbReference type="Proteomes" id="UP000006548">
    <property type="component" value="Chromosome 4"/>
</dbReference>
<dbReference type="ExpressionAtlas" id="Q38871">
    <property type="expression patterns" value="baseline and differential"/>
</dbReference>
<dbReference type="GO" id="GO:0005829">
    <property type="term" value="C:cytosol"/>
    <property type="evidence" value="ECO:0007005"/>
    <property type="project" value="TAIR"/>
</dbReference>
<dbReference type="GO" id="GO:0016020">
    <property type="term" value="C:membrane"/>
    <property type="evidence" value="ECO:0000304"/>
    <property type="project" value="TAIR"/>
</dbReference>
<dbReference type="GO" id="GO:0005886">
    <property type="term" value="C:plasma membrane"/>
    <property type="evidence" value="ECO:0000314"/>
    <property type="project" value="CACAO"/>
</dbReference>
<dbReference type="GO" id="GO:0005524">
    <property type="term" value="F:ATP binding"/>
    <property type="evidence" value="ECO:0007669"/>
    <property type="project" value="UniProtKB-KW"/>
</dbReference>
<dbReference type="GO" id="GO:0005509">
    <property type="term" value="F:calcium ion binding"/>
    <property type="evidence" value="ECO:0007669"/>
    <property type="project" value="InterPro"/>
</dbReference>
<dbReference type="GO" id="GO:0106310">
    <property type="term" value="F:protein serine kinase activity"/>
    <property type="evidence" value="ECO:0007669"/>
    <property type="project" value="RHEA"/>
</dbReference>
<dbReference type="GO" id="GO:0004674">
    <property type="term" value="F:protein serine/threonine kinase activity"/>
    <property type="evidence" value="ECO:0007669"/>
    <property type="project" value="UniProtKB-KW"/>
</dbReference>
<dbReference type="CDD" id="cd05117">
    <property type="entry name" value="STKc_CAMK"/>
    <property type="match status" value="1"/>
</dbReference>
<dbReference type="FunFam" id="1.10.238.10:FF:000015">
    <property type="entry name" value="Calcium-dependent protein kinase 1"/>
    <property type="match status" value="1"/>
</dbReference>
<dbReference type="FunFam" id="3.30.200.20:FF:000004">
    <property type="entry name" value="Calcium-dependent protein kinase 1"/>
    <property type="match status" value="1"/>
</dbReference>
<dbReference type="FunFam" id="1.10.510.10:FF:000178">
    <property type="entry name" value="Calcium-dependent protein kinase 5"/>
    <property type="match status" value="1"/>
</dbReference>
<dbReference type="Gene3D" id="1.10.238.10">
    <property type="entry name" value="EF-hand"/>
    <property type="match status" value="1"/>
</dbReference>
<dbReference type="Gene3D" id="3.30.200.20">
    <property type="entry name" value="Phosphorylase Kinase, domain 1"/>
    <property type="match status" value="1"/>
</dbReference>
<dbReference type="Gene3D" id="1.10.510.10">
    <property type="entry name" value="Transferase(Phosphotransferase) domain 1"/>
    <property type="match status" value="1"/>
</dbReference>
<dbReference type="InterPro" id="IPR050205">
    <property type="entry name" value="CDPK_Ser/Thr_kinases"/>
</dbReference>
<dbReference type="InterPro" id="IPR011992">
    <property type="entry name" value="EF-hand-dom_pair"/>
</dbReference>
<dbReference type="InterPro" id="IPR018247">
    <property type="entry name" value="EF_Hand_1_Ca_BS"/>
</dbReference>
<dbReference type="InterPro" id="IPR002048">
    <property type="entry name" value="EF_hand_dom"/>
</dbReference>
<dbReference type="InterPro" id="IPR011009">
    <property type="entry name" value="Kinase-like_dom_sf"/>
</dbReference>
<dbReference type="InterPro" id="IPR000719">
    <property type="entry name" value="Prot_kinase_dom"/>
</dbReference>
<dbReference type="InterPro" id="IPR017441">
    <property type="entry name" value="Protein_kinase_ATP_BS"/>
</dbReference>
<dbReference type="InterPro" id="IPR008271">
    <property type="entry name" value="Ser/Thr_kinase_AS"/>
</dbReference>
<dbReference type="PANTHER" id="PTHR24349">
    <property type="entry name" value="SERINE/THREONINE-PROTEIN KINASE"/>
    <property type="match status" value="1"/>
</dbReference>
<dbReference type="Pfam" id="PF13499">
    <property type="entry name" value="EF-hand_7"/>
    <property type="match status" value="2"/>
</dbReference>
<dbReference type="Pfam" id="PF00069">
    <property type="entry name" value="Pkinase"/>
    <property type="match status" value="1"/>
</dbReference>
<dbReference type="SMART" id="SM00054">
    <property type="entry name" value="EFh"/>
    <property type="match status" value="4"/>
</dbReference>
<dbReference type="SMART" id="SM00220">
    <property type="entry name" value="S_TKc"/>
    <property type="match status" value="1"/>
</dbReference>
<dbReference type="SUPFAM" id="SSF47473">
    <property type="entry name" value="EF-hand"/>
    <property type="match status" value="1"/>
</dbReference>
<dbReference type="SUPFAM" id="SSF56112">
    <property type="entry name" value="Protein kinase-like (PK-like)"/>
    <property type="match status" value="1"/>
</dbReference>
<dbReference type="PROSITE" id="PS00018">
    <property type="entry name" value="EF_HAND_1"/>
    <property type="match status" value="4"/>
</dbReference>
<dbReference type="PROSITE" id="PS50222">
    <property type="entry name" value="EF_HAND_2"/>
    <property type="match status" value="4"/>
</dbReference>
<dbReference type="PROSITE" id="PS00107">
    <property type="entry name" value="PROTEIN_KINASE_ATP"/>
    <property type="match status" value="1"/>
</dbReference>
<dbReference type="PROSITE" id="PS50011">
    <property type="entry name" value="PROTEIN_KINASE_DOM"/>
    <property type="match status" value="1"/>
</dbReference>
<dbReference type="PROSITE" id="PS00108">
    <property type="entry name" value="PROTEIN_KINASE_ST"/>
    <property type="match status" value="1"/>
</dbReference>
<comment type="function">
    <text>May play a role in signal transduction pathways that involve calcium as a second messenger.</text>
</comment>
<comment type="catalytic activity">
    <reaction>
        <text>L-seryl-[protein] + ATP = O-phospho-L-seryl-[protein] + ADP + H(+)</text>
        <dbReference type="Rhea" id="RHEA:17989"/>
        <dbReference type="Rhea" id="RHEA-COMP:9863"/>
        <dbReference type="Rhea" id="RHEA-COMP:11604"/>
        <dbReference type="ChEBI" id="CHEBI:15378"/>
        <dbReference type="ChEBI" id="CHEBI:29999"/>
        <dbReference type="ChEBI" id="CHEBI:30616"/>
        <dbReference type="ChEBI" id="CHEBI:83421"/>
        <dbReference type="ChEBI" id="CHEBI:456216"/>
        <dbReference type="EC" id="2.7.11.1"/>
    </reaction>
</comment>
<comment type="catalytic activity">
    <reaction>
        <text>L-threonyl-[protein] + ATP = O-phospho-L-threonyl-[protein] + ADP + H(+)</text>
        <dbReference type="Rhea" id="RHEA:46608"/>
        <dbReference type="Rhea" id="RHEA-COMP:11060"/>
        <dbReference type="Rhea" id="RHEA-COMP:11605"/>
        <dbReference type="ChEBI" id="CHEBI:15378"/>
        <dbReference type="ChEBI" id="CHEBI:30013"/>
        <dbReference type="ChEBI" id="CHEBI:30616"/>
        <dbReference type="ChEBI" id="CHEBI:61977"/>
        <dbReference type="ChEBI" id="CHEBI:456216"/>
        <dbReference type="EC" id="2.7.11.1"/>
    </reaction>
</comment>
<comment type="activity regulation">
    <text evidence="1">Activated by calcium. Autophosphorylation may play an important role in the regulation of the kinase activity (By similarity).</text>
</comment>
<comment type="subcellular location">
    <subcellularLocation>
        <location evidence="8">Membrane</location>
        <topology evidence="8">Lipid-anchor</topology>
    </subcellularLocation>
</comment>
<comment type="domain">
    <text evidence="1">There are 3 contiguous domains conserved in the CDPK subfamily: a kinase domain, an autoinhibitory (junction) domain and a calmodulin-like domain. The autoinhibitory domain (361-391) inactivates kinase activity under calcium-free conditions (By similarity).</text>
</comment>
<comment type="similarity">
    <text evidence="4">Belongs to the protein kinase superfamily. Ser/Thr protein kinase family. CDPK subfamily.</text>
</comment>
<gene>
    <name type="primary">CPK5</name>
    <name type="ordered locus">At4g35310</name>
    <name type="ORF">F23E12.130</name>
</gene>
<reference key="1">
    <citation type="journal article" date="1996" name="Plant Mol. Biol.">
        <title>Characterization of eight new members of the calmodulin-like domain protein kinase gene family from Arabidopsis thaliana.</title>
        <authorList>
            <person name="Hrabak E.M."/>
            <person name="Dickmann L.J."/>
            <person name="Satterlee J.S."/>
            <person name="Sussman M.R."/>
        </authorList>
    </citation>
    <scope>NUCLEOTIDE SEQUENCE [MRNA]</scope>
    <source>
        <strain>cv. Columbia</strain>
    </source>
</reference>
<reference key="2">
    <citation type="journal article" date="1999" name="Nature">
        <title>Sequence and analysis of chromosome 4 of the plant Arabidopsis thaliana.</title>
        <authorList>
            <person name="Mayer K.F.X."/>
            <person name="Schueller C."/>
            <person name="Wambutt R."/>
            <person name="Murphy G."/>
            <person name="Volckaert G."/>
            <person name="Pohl T."/>
            <person name="Duesterhoeft A."/>
            <person name="Stiekema W."/>
            <person name="Entian K.-D."/>
            <person name="Terryn N."/>
            <person name="Harris B."/>
            <person name="Ansorge W."/>
            <person name="Brandt P."/>
            <person name="Grivell L.A."/>
            <person name="Rieger M."/>
            <person name="Weichselgartner M."/>
            <person name="de Simone V."/>
            <person name="Obermaier B."/>
            <person name="Mache R."/>
            <person name="Mueller M."/>
            <person name="Kreis M."/>
            <person name="Delseny M."/>
            <person name="Puigdomenech P."/>
            <person name="Watson M."/>
            <person name="Schmidtheini T."/>
            <person name="Reichert B."/>
            <person name="Portetelle D."/>
            <person name="Perez-Alonso M."/>
            <person name="Boutry M."/>
            <person name="Bancroft I."/>
            <person name="Vos P."/>
            <person name="Hoheisel J."/>
            <person name="Zimmermann W."/>
            <person name="Wedler H."/>
            <person name="Ridley P."/>
            <person name="Langham S.-A."/>
            <person name="McCullagh B."/>
            <person name="Bilham L."/>
            <person name="Robben J."/>
            <person name="van der Schueren J."/>
            <person name="Grymonprez B."/>
            <person name="Chuang Y.-J."/>
            <person name="Vandenbussche F."/>
            <person name="Braeken M."/>
            <person name="Weltjens I."/>
            <person name="Voet M."/>
            <person name="Bastiaens I."/>
            <person name="Aert R."/>
            <person name="Defoor E."/>
            <person name="Weitzenegger T."/>
            <person name="Bothe G."/>
            <person name="Ramsperger U."/>
            <person name="Hilbert H."/>
            <person name="Braun M."/>
            <person name="Holzer E."/>
            <person name="Brandt A."/>
            <person name="Peters S."/>
            <person name="van Staveren M."/>
            <person name="Dirkse W."/>
            <person name="Mooijman P."/>
            <person name="Klein Lankhorst R."/>
            <person name="Rose M."/>
            <person name="Hauf J."/>
            <person name="Koetter P."/>
            <person name="Berneiser S."/>
            <person name="Hempel S."/>
            <person name="Feldpausch M."/>
            <person name="Lamberth S."/>
            <person name="Van den Daele H."/>
            <person name="De Keyser A."/>
            <person name="Buysshaert C."/>
            <person name="Gielen J."/>
            <person name="Villarroel R."/>
            <person name="De Clercq R."/>
            <person name="van Montagu M."/>
            <person name="Rogers J."/>
            <person name="Cronin A."/>
            <person name="Quail M.A."/>
            <person name="Bray-Allen S."/>
            <person name="Clark L."/>
            <person name="Doggett J."/>
            <person name="Hall S."/>
            <person name="Kay M."/>
            <person name="Lennard N."/>
            <person name="McLay K."/>
            <person name="Mayes R."/>
            <person name="Pettett A."/>
            <person name="Rajandream M.A."/>
            <person name="Lyne M."/>
            <person name="Benes V."/>
            <person name="Rechmann S."/>
            <person name="Borkova D."/>
            <person name="Bloecker H."/>
            <person name="Scharfe M."/>
            <person name="Grimm M."/>
            <person name="Loehnert T.-H."/>
            <person name="Dose S."/>
            <person name="de Haan M."/>
            <person name="Maarse A.C."/>
            <person name="Schaefer M."/>
            <person name="Mueller-Auer S."/>
            <person name="Gabel C."/>
            <person name="Fuchs M."/>
            <person name="Fartmann B."/>
            <person name="Granderath K."/>
            <person name="Dauner D."/>
            <person name="Herzl A."/>
            <person name="Neumann S."/>
            <person name="Argiriou A."/>
            <person name="Vitale D."/>
            <person name="Liguori R."/>
            <person name="Piravandi E."/>
            <person name="Massenet O."/>
            <person name="Quigley F."/>
            <person name="Clabauld G."/>
            <person name="Muendlein A."/>
            <person name="Felber R."/>
            <person name="Schnabl S."/>
            <person name="Hiller R."/>
            <person name="Schmidt W."/>
            <person name="Lecharny A."/>
            <person name="Aubourg S."/>
            <person name="Chefdor F."/>
            <person name="Cooke R."/>
            <person name="Berger C."/>
            <person name="Monfort A."/>
            <person name="Casacuberta E."/>
            <person name="Gibbons T."/>
            <person name="Weber N."/>
            <person name="Vandenbol M."/>
            <person name="Bargues M."/>
            <person name="Terol J."/>
            <person name="Torres A."/>
            <person name="Perez-Perez A."/>
            <person name="Purnelle B."/>
            <person name="Bent E."/>
            <person name="Johnson S."/>
            <person name="Tacon D."/>
            <person name="Jesse T."/>
            <person name="Heijnen L."/>
            <person name="Schwarz S."/>
            <person name="Scholler P."/>
            <person name="Heber S."/>
            <person name="Francs P."/>
            <person name="Bielke C."/>
            <person name="Frishman D."/>
            <person name="Haase D."/>
            <person name="Lemcke K."/>
            <person name="Mewes H.-W."/>
            <person name="Stocker S."/>
            <person name="Zaccaria P."/>
            <person name="Bevan M."/>
            <person name="Wilson R.K."/>
            <person name="de la Bastide M."/>
            <person name="Habermann K."/>
            <person name="Parnell L."/>
            <person name="Dedhia N."/>
            <person name="Gnoj L."/>
            <person name="Schutz K."/>
            <person name="Huang E."/>
            <person name="Spiegel L."/>
            <person name="Sekhon M."/>
            <person name="Murray J."/>
            <person name="Sheet P."/>
            <person name="Cordes M."/>
            <person name="Abu-Threideh J."/>
            <person name="Stoneking T."/>
            <person name="Kalicki J."/>
            <person name="Graves T."/>
            <person name="Harmon G."/>
            <person name="Edwards J."/>
            <person name="Latreille P."/>
            <person name="Courtney L."/>
            <person name="Cloud J."/>
            <person name="Abbott A."/>
            <person name="Scott K."/>
            <person name="Johnson D."/>
            <person name="Minx P."/>
            <person name="Bentley D."/>
            <person name="Fulton B."/>
            <person name="Miller N."/>
            <person name="Greco T."/>
            <person name="Kemp K."/>
            <person name="Kramer J."/>
            <person name="Fulton L."/>
            <person name="Mardis E."/>
            <person name="Dante M."/>
            <person name="Pepin K."/>
            <person name="Hillier L.W."/>
            <person name="Nelson J."/>
            <person name="Spieth J."/>
            <person name="Ryan E."/>
            <person name="Andrews S."/>
            <person name="Geisel C."/>
            <person name="Layman D."/>
            <person name="Du H."/>
            <person name="Ali J."/>
            <person name="Berghoff A."/>
            <person name="Jones K."/>
            <person name="Drone K."/>
            <person name="Cotton M."/>
            <person name="Joshu C."/>
            <person name="Antonoiu B."/>
            <person name="Zidanic M."/>
            <person name="Strong C."/>
            <person name="Sun H."/>
            <person name="Lamar B."/>
            <person name="Yordan C."/>
            <person name="Ma P."/>
            <person name="Zhong J."/>
            <person name="Preston R."/>
            <person name="Vil D."/>
            <person name="Shekher M."/>
            <person name="Matero A."/>
            <person name="Shah R."/>
            <person name="Swaby I.K."/>
            <person name="O'Shaughnessy A."/>
            <person name="Rodriguez M."/>
            <person name="Hoffman J."/>
            <person name="Till S."/>
            <person name="Granat S."/>
            <person name="Shohdy N."/>
            <person name="Hasegawa A."/>
            <person name="Hameed A."/>
            <person name="Lodhi M."/>
            <person name="Johnson A."/>
            <person name="Chen E."/>
            <person name="Marra M.A."/>
            <person name="Martienssen R."/>
            <person name="McCombie W.R."/>
        </authorList>
    </citation>
    <scope>NUCLEOTIDE SEQUENCE [LARGE SCALE GENOMIC DNA]</scope>
    <source>
        <strain>cv. Columbia</strain>
    </source>
</reference>
<reference key="3">
    <citation type="journal article" date="2017" name="Plant J.">
        <title>Araport11: a complete reannotation of the Arabidopsis thaliana reference genome.</title>
        <authorList>
            <person name="Cheng C.Y."/>
            <person name="Krishnakumar V."/>
            <person name="Chan A.P."/>
            <person name="Thibaud-Nissen F."/>
            <person name="Schobel S."/>
            <person name="Town C.D."/>
        </authorList>
    </citation>
    <scope>GENOME REANNOTATION</scope>
    <source>
        <strain>cv. Columbia</strain>
    </source>
</reference>
<reference key="4">
    <citation type="submission" date="2006-07" db="EMBL/GenBank/DDBJ databases">
        <title>Large-scale analysis of RIKEN Arabidopsis full-length (RAFL) cDNAs.</title>
        <authorList>
            <person name="Totoki Y."/>
            <person name="Seki M."/>
            <person name="Ishida J."/>
            <person name="Nakajima M."/>
            <person name="Enju A."/>
            <person name="Kamiya A."/>
            <person name="Narusaka M."/>
            <person name="Shin-i T."/>
            <person name="Nakagawa M."/>
            <person name="Sakamoto N."/>
            <person name="Oishi K."/>
            <person name="Kohara Y."/>
            <person name="Kobayashi M."/>
            <person name="Toyoda A."/>
            <person name="Sakaki Y."/>
            <person name="Sakurai T."/>
            <person name="Iida K."/>
            <person name="Akiyama K."/>
            <person name="Satou M."/>
            <person name="Toyoda T."/>
            <person name="Konagaya A."/>
            <person name="Carninci P."/>
            <person name="Kawai J."/>
            <person name="Hayashizaki Y."/>
            <person name="Shinozaki K."/>
        </authorList>
    </citation>
    <scope>NUCLEOTIDE SEQUENCE [LARGE SCALE MRNA]</scope>
    <source>
        <strain>cv. Columbia</strain>
    </source>
</reference>
<reference key="5">
    <citation type="journal article" date="2001" name="New Phytol.">
        <title>The CDPK superfamily of protein kinases.</title>
        <authorList>
            <person name="Harmon A.C."/>
            <person name="Gribskov M."/>
            <person name="Gubrium E."/>
            <person name="Harper J.F."/>
        </authorList>
    </citation>
    <scope>GENE FAMILY</scope>
    <scope>NOMENCLATURE</scope>
</reference>
<reference key="6">
    <citation type="journal article" date="2002" name="Plant Physiol.">
        <title>Calcium signaling through protein kinases. The Arabidopsis calcium-dependent protein kinase gene family.</title>
        <authorList>
            <person name="Cheng S.-H."/>
            <person name="Willmann M.R."/>
            <person name="Chen H.-C."/>
            <person name="Sheen J."/>
        </authorList>
    </citation>
    <scope>GENE FAMILY</scope>
    <scope>NOMENCLATURE</scope>
</reference>
<reference key="7">
    <citation type="journal article" date="2003" name="Plant Physiol.">
        <title>The Arabidopsis CDPK-SnRK superfamily of protein kinases.</title>
        <authorList>
            <person name="Hrabak E.M."/>
            <person name="Chan C.W.M."/>
            <person name="Gribskov M."/>
            <person name="Harper J.F."/>
            <person name="Choi J.H."/>
            <person name="Halford N."/>
            <person name="Kudla J."/>
            <person name="Luan S."/>
            <person name="Nimmo H.G."/>
            <person name="Sussman M.R."/>
            <person name="Thomas M."/>
            <person name="Walker-Simmons K."/>
            <person name="Zhu J.-K."/>
            <person name="Harmon A.C."/>
        </authorList>
    </citation>
    <scope>GENE FAMILY</scope>
    <scope>NOMENCLATURE</scope>
</reference>
<keyword id="KW-0067">ATP-binding</keyword>
<keyword id="KW-0106">Calcium</keyword>
<keyword id="KW-0418">Kinase</keyword>
<keyword id="KW-0449">Lipoprotein</keyword>
<keyword id="KW-0472">Membrane</keyword>
<keyword id="KW-0479">Metal-binding</keyword>
<keyword id="KW-0519">Myristate</keyword>
<keyword id="KW-0547">Nucleotide-binding</keyword>
<keyword id="KW-0597">Phosphoprotein</keyword>
<keyword id="KW-1185">Reference proteome</keyword>
<keyword id="KW-0677">Repeat</keyword>
<keyword id="KW-0723">Serine/threonine-protein kinase</keyword>
<keyword id="KW-0808">Transferase</keyword>
<evidence type="ECO:0000250" key="1"/>
<evidence type="ECO:0000250" key="2">
    <source>
        <dbReference type="UniProtKB" id="Q9FKW4"/>
    </source>
</evidence>
<evidence type="ECO:0000255" key="3"/>
<evidence type="ECO:0000255" key="4">
    <source>
        <dbReference type="PROSITE-ProRule" id="PRU00159"/>
    </source>
</evidence>
<evidence type="ECO:0000255" key="5">
    <source>
        <dbReference type="PROSITE-ProRule" id="PRU00448"/>
    </source>
</evidence>
<evidence type="ECO:0000255" key="6">
    <source>
        <dbReference type="PROSITE-ProRule" id="PRU10027"/>
    </source>
</evidence>
<evidence type="ECO:0000256" key="7">
    <source>
        <dbReference type="SAM" id="MobiDB-lite"/>
    </source>
</evidence>
<evidence type="ECO:0000305" key="8"/>
<sequence>MGNSCRGSFKDKLDEGDNNKPEDYSKTSTTNLSSNSDHSPNAADIIAQEFSKDNNSNNNSKDPALVIPLREPIMRRNPDNQAYYVLGHKTPNIRDIYTLSRKLGQGQFGTTYLCTEIASGVDYACKSISKRKLISKEDVEDVRREIQIMHHLAGHGSIVTIKGAYEDSLYVHIVMELCAGGELFDRIIQRGHYSERKAAELTKIIVGVVEACHSLGVMHRDLKPENFLLVNKDDDFSLKAIDFGLSVFFKPGQIFTDVVGSPYYVAPEVLLKRYGPEADVWTAGVILYILLSGVPPFWAETQQGIFDAVLKGYIDFESDPWPVISDSAKDLIRRMLSSKPAERLTAHEVLRHPWICENGVAPDRALDPAVLSRLKQFSAMNKLKKMALKVIAESLSEEEIAGLREMFQAMDTDNSGAITFDELKAGLRKYGSTLKDTEIHDLMDAADVDNSGTIDYSEFIAATIHLNKLEREEHLVAAFQYFDKDGSGFITIDELQQACVEHGMADVFLEDIIKEVDQNNDGKIDYGEFVEMMQKGNAGVGRRTMRNSLNISMRDA</sequence>
<protein>
    <recommendedName>
        <fullName>Calcium-dependent protein kinase 5</fullName>
        <ecNumber>2.7.11.1</ecNumber>
    </recommendedName>
    <alternativeName>
        <fullName>Calmodulin-domain protein kinase CDPK isoform 5</fullName>
    </alternativeName>
</protein>
<accession>Q38871</accession>
<proteinExistence type="evidence at transcript level"/>
<name>CDPK5_ARATH</name>
<organism>
    <name type="scientific">Arabidopsis thaliana</name>
    <name type="common">Mouse-ear cress</name>
    <dbReference type="NCBI Taxonomy" id="3702"/>
    <lineage>
        <taxon>Eukaryota</taxon>
        <taxon>Viridiplantae</taxon>
        <taxon>Streptophyta</taxon>
        <taxon>Embryophyta</taxon>
        <taxon>Tracheophyta</taxon>
        <taxon>Spermatophyta</taxon>
        <taxon>Magnoliopsida</taxon>
        <taxon>eudicotyledons</taxon>
        <taxon>Gunneridae</taxon>
        <taxon>Pentapetalae</taxon>
        <taxon>rosids</taxon>
        <taxon>malvids</taxon>
        <taxon>Brassicales</taxon>
        <taxon>Brassicaceae</taxon>
        <taxon>Camelineae</taxon>
        <taxon>Arabidopsis</taxon>
    </lineage>
</organism>
<feature type="initiator methionine" description="Removed" evidence="3">
    <location>
        <position position="1"/>
    </location>
</feature>
<feature type="chain" id="PRO_0000363331" description="Calcium-dependent protein kinase 5">
    <location>
        <begin position="2"/>
        <end position="556"/>
    </location>
</feature>
<feature type="domain" description="Protein kinase" evidence="4">
    <location>
        <begin position="97"/>
        <end position="355"/>
    </location>
</feature>
<feature type="domain" description="EF-hand 1" evidence="5">
    <location>
        <begin position="398"/>
        <end position="433"/>
    </location>
</feature>
<feature type="domain" description="EF-hand 2" evidence="5">
    <location>
        <begin position="434"/>
        <end position="469"/>
    </location>
</feature>
<feature type="domain" description="EF-hand 3" evidence="5">
    <location>
        <begin position="470"/>
        <end position="505"/>
    </location>
</feature>
<feature type="domain" description="EF-hand 4" evidence="5">
    <location>
        <begin position="509"/>
        <end position="539"/>
    </location>
</feature>
<feature type="region of interest" description="Disordered" evidence="7">
    <location>
        <begin position="1"/>
        <end position="40"/>
    </location>
</feature>
<feature type="region of interest" description="Autoinhibitory domain" evidence="1">
    <location>
        <begin position="361"/>
        <end position="391"/>
    </location>
</feature>
<feature type="compositionally biased region" description="Basic and acidic residues" evidence="7">
    <location>
        <begin position="8"/>
        <end position="25"/>
    </location>
</feature>
<feature type="compositionally biased region" description="Low complexity" evidence="7">
    <location>
        <begin position="26"/>
        <end position="39"/>
    </location>
</feature>
<feature type="active site" description="Proton acceptor" evidence="4 6">
    <location>
        <position position="221"/>
    </location>
</feature>
<feature type="binding site" evidence="4">
    <location>
        <begin position="103"/>
        <end position="111"/>
    </location>
    <ligand>
        <name>ATP</name>
        <dbReference type="ChEBI" id="CHEBI:30616"/>
    </ligand>
</feature>
<feature type="binding site" evidence="4">
    <location>
        <position position="126"/>
    </location>
    <ligand>
        <name>ATP</name>
        <dbReference type="ChEBI" id="CHEBI:30616"/>
    </ligand>
</feature>
<feature type="binding site" evidence="5">
    <location>
        <position position="411"/>
    </location>
    <ligand>
        <name>Ca(2+)</name>
        <dbReference type="ChEBI" id="CHEBI:29108"/>
        <label>1</label>
    </ligand>
</feature>
<feature type="binding site" evidence="5">
    <location>
        <position position="413"/>
    </location>
    <ligand>
        <name>Ca(2+)</name>
        <dbReference type="ChEBI" id="CHEBI:29108"/>
        <label>1</label>
    </ligand>
</feature>
<feature type="binding site" evidence="5">
    <location>
        <position position="415"/>
    </location>
    <ligand>
        <name>Ca(2+)</name>
        <dbReference type="ChEBI" id="CHEBI:29108"/>
        <label>1</label>
    </ligand>
</feature>
<feature type="binding site" evidence="5">
    <location>
        <position position="422"/>
    </location>
    <ligand>
        <name>Ca(2+)</name>
        <dbReference type="ChEBI" id="CHEBI:29108"/>
        <label>1</label>
    </ligand>
</feature>
<feature type="binding site" evidence="5">
    <location>
        <position position="447"/>
    </location>
    <ligand>
        <name>Ca(2+)</name>
        <dbReference type="ChEBI" id="CHEBI:29108"/>
        <label>2</label>
    </ligand>
</feature>
<feature type="binding site" evidence="5">
    <location>
        <position position="449"/>
    </location>
    <ligand>
        <name>Ca(2+)</name>
        <dbReference type="ChEBI" id="CHEBI:29108"/>
        <label>2</label>
    </ligand>
</feature>
<feature type="binding site" evidence="5">
    <location>
        <position position="451"/>
    </location>
    <ligand>
        <name>Ca(2+)</name>
        <dbReference type="ChEBI" id="CHEBI:29108"/>
        <label>2</label>
    </ligand>
</feature>
<feature type="binding site" evidence="5">
    <location>
        <position position="453"/>
    </location>
    <ligand>
        <name>Ca(2+)</name>
        <dbReference type="ChEBI" id="CHEBI:29108"/>
        <label>2</label>
    </ligand>
</feature>
<feature type="binding site" evidence="5">
    <location>
        <position position="458"/>
    </location>
    <ligand>
        <name>Ca(2+)</name>
        <dbReference type="ChEBI" id="CHEBI:29108"/>
        <label>2</label>
    </ligand>
</feature>
<feature type="binding site" evidence="5">
    <location>
        <position position="483"/>
    </location>
    <ligand>
        <name>Ca(2+)</name>
        <dbReference type="ChEBI" id="CHEBI:29108"/>
        <label>3</label>
    </ligand>
</feature>
<feature type="binding site" evidence="5">
    <location>
        <position position="485"/>
    </location>
    <ligand>
        <name>Ca(2+)</name>
        <dbReference type="ChEBI" id="CHEBI:29108"/>
        <label>3</label>
    </ligand>
</feature>
<feature type="binding site" evidence="5">
    <location>
        <position position="487"/>
    </location>
    <ligand>
        <name>Ca(2+)</name>
        <dbReference type="ChEBI" id="CHEBI:29108"/>
        <label>3</label>
    </ligand>
</feature>
<feature type="binding site" evidence="5">
    <location>
        <position position="494"/>
    </location>
    <ligand>
        <name>Ca(2+)</name>
        <dbReference type="ChEBI" id="CHEBI:29108"/>
        <label>3</label>
    </ligand>
</feature>
<feature type="binding site" evidence="5">
    <location>
        <position position="517"/>
    </location>
    <ligand>
        <name>Ca(2+)</name>
        <dbReference type="ChEBI" id="CHEBI:29108"/>
        <label>4</label>
    </ligand>
</feature>
<feature type="binding site" evidence="5">
    <location>
        <position position="519"/>
    </location>
    <ligand>
        <name>Ca(2+)</name>
        <dbReference type="ChEBI" id="CHEBI:29108"/>
        <label>4</label>
    </ligand>
</feature>
<feature type="binding site" evidence="5">
    <location>
        <position position="521"/>
    </location>
    <ligand>
        <name>Ca(2+)</name>
        <dbReference type="ChEBI" id="CHEBI:29108"/>
        <label>4</label>
    </ligand>
</feature>
<feature type="binding site" evidence="5">
    <location>
        <position position="523"/>
    </location>
    <ligand>
        <name>Ca(2+)</name>
        <dbReference type="ChEBI" id="CHEBI:29108"/>
        <label>4</label>
    </ligand>
</feature>
<feature type="binding site" evidence="5">
    <location>
        <position position="528"/>
    </location>
    <ligand>
        <name>Ca(2+)</name>
        <dbReference type="ChEBI" id="CHEBI:29108"/>
        <label>4</label>
    </ligand>
</feature>
<feature type="modified residue" description="Phosphoserine" evidence="2">
    <location>
        <position position="261"/>
    </location>
</feature>
<feature type="lipid moiety-binding region" description="N-myristoyl glycine" evidence="3">
    <location>
        <position position="2"/>
    </location>
</feature>